<feature type="chain" id="PRO_0000386666" description="Uncharacterized protein YoyH">
    <location>
        <begin position="1"/>
        <end position="59"/>
    </location>
</feature>
<keyword id="KW-1185">Reference proteome</keyword>
<reference key="1">
    <citation type="journal article" date="1997" name="Nature">
        <title>The complete genome sequence of the Gram-positive bacterium Bacillus subtilis.</title>
        <authorList>
            <person name="Kunst F."/>
            <person name="Ogasawara N."/>
            <person name="Moszer I."/>
            <person name="Albertini A.M."/>
            <person name="Alloni G."/>
            <person name="Azevedo V."/>
            <person name="Bertero M.G."/>
            <person name="Bessieres P."/>
            <person name="Bolotin A."/>
            <person name="Borchert S."/>
            <person name="Borriss R."/>
            <person name="Boursier L."/>
            <person name="Brans A."/>
            <person name="Braun M."/>
            <person name="Brignell S.C."/>
            <person name="Bron S."/>
            <person name="Brouillet S."/>
            <person name="Bruschi C.V."/>
            <person name="Caldwell B."/>
            <person name="Capuano V."/>
            <person name="Carter N.M."/>
            <person name="Choi S.-K."/>
            <person name="Codani J.-J."/>
            <person name="Connerton I.F."/>
            <person name="Cummings N.J."/>
            <person name="Daniel R.A."/>
            <person name="Denizot F."/>
            <person name="Devine K.M."/>
            <person name="Duesterhoeft A."/>
            <person name="Ehrlich S.D."/>
            <person name="Emmerson P.T."/>
            <person name="Entian K.-D."/>
            <person name="Errington J."/>
            <person name="Fabret C."/>
            <person name="Ferrari E."/>
            <person name="Foulger D."/>
            <person name="Fritz C."/>
            <person name="Fujita M."/>
            <person name="Fujita Y."/>
            <person name="Fuma S."/>
            <person name="Galizzi A."/>
            <person name="Galleron N."/>
            <person name="Ghim S.-Y."/>
            <person name="Glaser P."/>
            <person name="Goffeau A."/>
            <person name="Golightly E.J."/>
            <person name="Grandi G."/>
            <person name="Guiseppi G."/>
            <person name="Guy B.J."/>
            <person name="Haga K."/>
            <person name="Haiech J."/>
            <person name="Harwood C.R."/>
            <person name="Henaut A."/>
            <person name="Hilbert H."/>
            <person name="Holsappel S."/>
            <person name="Hosono S."/>
            <person name="Hullo M.-F."/>
            <person name="Itaya M."/>
            <person name="Jones L.-M."/>
            <person name="Joris B."/>
            <person name="Karamata D."/>
            <person name="Kasahara Y."/>
            <person name="Klaerr-Blanchard M."/>
            <person name="Klein C."/>
            <person name="Kobayashi Y."/>
            <person name="Koetter P."/>
            <person name="Koningstein G."/>
            <person name="Krogh S."/>
            <person name="Kumano M."/>
            <person name="Kurita K."/>
            <person name="Lapidus A."/>
            <person name="Lardinois S."/>
            <person name="Lauber J."/>
            <person name="Lazarevic V."/>
            <person name="Lee S.-M."/>
            <person name="Levine A."/>
            <person name="Liu H."/>
            <person name="Masuda S."/>
            <person name="Mauel C."/>
            <person name="Medigue C."/>
            <person name="Medina N."/>
            <person name="Mellado R.P."/>
            <person name="Mizuno M."/>
            <person name="Moestl D."/>
            <person name="Nakai S."/>
            <person name="Noback M."/>
            <person name="Noone D."/>
            <person name="O'Reilly M."/>
            <person name="Ogawa K."/>
            <person name="Ogiwara A."/>
            <person name="Oudega B."/>
            <person name="Park S.-H."/>
            <person name="Parro V."/>
            <person name="Pohl T.M."/>
            <person name="Portetelle D."/>
            <person name="Porwollik S."/>
            <person name="Prescott A.M."/>
            <person name="Presecan E."/>
            <person name="Pujic P."/>
            <person name="Purnelle B."/>
            <person name="Rapoport G."/>
            <person name="Rey M."/>
            <person name="Reynolds S."/>
            <person name="Rieger M."/>
            <person name="Rivolta C."/>
            <person name="Rocha E."/>
            <person name="Roche B."/>
            <person name="Rose M."/>
            <person name="Sadaie Y."/>
            <person name="Sato T."/>
            <person name="Scanlan E."/>
            <person name="Schleich S."/>
            <person name="Schroeter R."/>
            <person name="Scoffone F."/>
            <person name="Sekiguchi J."/>
            <person name="Sekowska A."/>
            <person name="Seror S.J."/>
            <person name="Serror P."/>
            <person name="Shin B.-S."/>
            <person name="Soldo B."/>
            <person name="Sorokin A."/>
            <person name="Tacconi E."/>
            <person name="Takagi T."/>
            <person name="Takahashi H."/>
            <person name="Takemaru K."/>
            <person name="Takeuchi M."/>
            <person name="Tamakoshi A."/>
            <person name="Tanaka T."/>
            <person name="Terpstra P."/>
            <person name="Tognoni A."/>
            <person name="Tosato V."/>
            <person name="Uchiyama S."/>
            <person name="Vandenbol M."/>
            <person name="Vannier F."/>
            <person name="Vassarotti A."/>
            <person name="Viari A."/>
            <person name="Wambutt R."/>
            <person name="Wedler E."/>
            <person name="Wedler H."/>
            <person name="Weitzenegger T."/>
            <person name="Winters P."/>
            <person name="Wipat A."/>
            <person name="Yamamoto H."/>
            <person name="Yamane K."/>
            <person name="Yasumoto K."/>
            <person name="Yata K."/>
            <person name="Yoshida K."/>
            <person name="Yoshikawa H.-F."/>
            <person name="Zumstein E."/>
            <person name="Yoshikawa H."/>
            <person name="Danchin A."/>
        </authorList>
    </citation>
    <scope>NUCLEOTIDE SEQUENCE [LARGE SCALE GENOMIC DNA]</scope>
    <source>
        <strain>168</strain>
    </source>
</reference>
<gene>
    <name type="primary">yoyH</name>
    <name type="ordered locus">BSU20928</name>
</gene>
<proteinExistence type="predicted"/>
<accession>C0H437</accession>
<sequence>MEEKYETNGYDTSIVYDYKEYPDVKYGRCDNCDYTLFKSSVKSGIFLRECRRCGMKKSI</sequence>
<name>YOYH_BACSU</name>
<organism>
    <name type="scientific">Bacillus subtilis (strain 168)</name>
    <dbReference type="NCBI Taxonomy" id="224308"/>
    <lineage>
        <taxon>Bacteria</taxon>
        <taxon>Bacillati</taxon>
        <taxon>Bacillota</taxon>
        <taxon>Bacilli</taxon>
        <taxon>Bacillales</taxon>
        <taxon>Bacillaceae</taxon>
        <taxon>Bacillus</taxon>
    </lineage>
</organism>
<dbReference type="EMBL" id="AL009126">
    <property type="protein sequence ID" value="CAX52645.1"/>
    <property type="molecule type" value="Genomic_DNA"/>
</dbReference>
<dbReference type="RefSeq" id="WP_003231000.1">
    <property type="nucleotide sequence ID" value="NZ_OZ025638.1"/>
</dbReference>
<dbReference type="RefSeq" id="YP_003097748.1">
    <property type="nucleotide sequence ID" value="NC_000964.3"/>
</dbReference>
<dbReference type="FunCoup" id="C0H437">
    <property type="interactions" value="1"/>
</dbReference>
<dbReference type="STRING" id="224308.BSU20928"/>
<dbReference type="PaxDb" id="224308-BSU20928"/>
<dbReference type="EnsemblBacteria" id="CAX52645">
    <property type="protein sequence ID" value="CAX52645"/>
    <property type="gene ID" value="BSU_20928"/>
</dbReference>
<dbReference type="GeneID" id="8303201"/>
<dbReference type="KEGG" id="bsu:BSU20928"/>
<dbReference type="PATRIC" id="fig|224308.43.peg.2190"/>
<dbReference type="eggNOG" id="ENOG502ZJEU">
    <property type="taxonomic scope" value="Bacteria"/>
</dbReference>
<dbReference type="InParanoid" id="C0H437"/>
<dbReference type="OrthoDB" id="2679802at2"/>
<dbReference type="BioCyc" id="BSUB:BSU20928-MONOMER"/>
<dbReference type="Proteomes" id="UP000001570">
    <property type="component" value="Chromosome"/>
</dbReference>
<protein>
    <recommendedName>
        <fullName>Uncharacterized protein YoyH</fullName>
    </recommendedName>
</protein>